<gene>
    <name type="ordered locus">Rv1405c</name>
    <name type="ORF">MTCY21B4.22c</name>
</gene>
<keyword id="KW-1185">Reference proteome</keyword>
<keyword id="KW-0732">Signal</keyword>
<name>Y1405_MYCTU</name>
<evidence type="ECO:0000255" key="1"/>
<evidence type="ECO:0000305" key="2"/>
<reference key="1">
    <citation type="journal article" date="1998" name="Nature">
        <title>Deciphering the biology of Mycobacterium tuberculosis from the complete genome sequence.</title>
        <authorList>
            <person name="Cole S.T."/>
            <person name="Brosch R."/>
            <person name="Parkhill J."/>
            <person name="Garnier T."/>
            <person name="Churcher C.M."/>
            <person name="Harris D.E."/>
            <person name="Gordon S.V."/>
            <person name="Eiglmeier K."/>
            <person name="Gas S."/>
            <person name="Barry C.E. III"/>
            <person name="Tekaia F."/>
            <person name="Badcock K."/>
            <person name="Basham D."/>
            <person name="Brown D."/>
            <person name="Chillingworth T."/>
            <person name="Connor R."/>
            <person name="Davies R.M."/>
            <person name="Devlin K."/>
            <person name="Feltwell T."/>
            <person name="Gentles S."/>
            <person name="Hamlin N."/>
            <person name="Holroyd S."/>
            <person name="Hornsby T."/>
            <person name="Jagels K."/>
            <person name="Krogh A."/>
            <person name="McLean J."/>
            <person name="Moule S."/>
            <person name="Murphy L.D."/>
            <person name="Oliver S."/>
            <person name="Osborne J."/>
            <person name="Quail M.A."/>
            <person name="Rajandream M.A."/>
            <person name="Rogers J."/>
            <person name="Rutter S."/>
            <person name="Seeger K."/>
            <person name="Skelton S."/>
            <person name="Squares S."/>
            <person name="Squares R."/>
            <person name="Sulston J.E."/>
            <person name="Taylor K."/>
            <person name="Whitehead S."/>
            <person name="Barrell B.G."/>
        </authorList>
    </citation>
    <scope>NUCLEOTIDE SEQUENCE [LARGE SCALE GENOMIC DNA]</scope>
    <source>
        <strain>ATCC 25618 / H37Rv</strain>
    </source>
</reference>
<reference key="2">
    <citation type="journal article" date="2011" name="Mol. Cell. Proteomics">
        <title>Proteogenomic analysis of Mycobacterium tuberculosis by high resolution mass spectrometry.</title>
        <authorList>
            <person name="Kelkar D.S."/>
            <person name="Kumar D."/>
            <person name="Kumar P."/>
            <person name="Balakrishnan L."/>
            <person name="Muthusamy B."/>
            <person name="Yadav A.K."/>
            <person name="Shrivastava P."/>
            <person name="Marimuthu A."/>
            <person name="Anand S."/>
            <person name="Sundaram H."/>
            <person name="Kingsbury R."/>
            <person name="Harsha H.C."/>
            <person name="Nair B."/>
            <person name="Prasad T.S."/>
            <person name="Chauhan D.S."/>
            <person name="Katoch K."/>
            <person name="Katoch V.M."/>
            <person name="Kumar P."/>
            <person name="Chaerkady R."/>
            <person name="Ramachandran S."/>
            <person name="Dash D."/>
            <person name="Pandey A."/>
        </authorList>
    </citation>
    <scope>IDENTIFICATION BY MASS SPECTROMETRY [LARGE SCALE ANALYSIS]</scope>
    <source>
        <strain>ATCC 25618 / H37Rv</strain>
    </source>
</reference>
<protein>
    <recommendedName>
        <fullName>Uncharacterized protein Rv1405c</fullName>
    </recommendedName>
</protein>
<dbReference type="EMBL" id="AL123456">
    <property type="protein sequence ID" value="CCP44164.1"/>
    <property type="molecule type" value="Genomic_DNA"/>
</dbReference>
<dbReference type="PIR" id="B70901">
    <property type="entry name" value="B70901"/>
</dbReference>
<dbReference type="RefSeq" id="NP_215921.1">
    <property type="nucleotide sequence ID" value="NC_000962.3"/>
</dbReference>
<dbReference type="RefSeq" id="WP_003407297.1">
    <property type="nucleotide sequence ID" value="NZ_NVQJ01000038.1"/>
</dbReference>
<dbReference type="SMR" id="P9WLY7"/>
<dbReference type="STRING" id="83332.Rv1405c"/>
<dbReference type="PaxDb" id="83332-Rv1405c"/>
<dbReference type="DNASU" id="886714"/>
<dbReference type="GeneID" id="886714"/>
<dbReference type="KEGG" id="mtu:Rv1405c"/>
<dbReference type="KEGG" id="mtv:RVBD_1405c"/>
<dbReference type="TubercuList" id="Rv1405c"/>
<dbReference type="eggNOG" id="COG2226">
    <property type="taxonomic scope" value="Bacteria"/>
</dbReference>
<dbReference type="InParanoid" id="P9WLY7"/>
<dbReference type="OrthoDB" id="9795634at2"/>
<dbReference type="PhylomeDB" id="P9WLY7"/>
<dbReference type="Proteomes" id="UP000001584">
    <property type="component" value="Chromosome"/>
</dbReference>
<dbReference type="GO" id="GO:0008168">
    <property type="term" value="F:methyltransferase activity"/>
    <property type="evidence" value="ECO:0000318"/>
    <property type="project" value="GO_Central"/>
</dbReference>
<dbReference type="GO" id="GO:0008757">
    <property type="term" value="F:S-adenosylmethionine-dependent methyltransferase activity"/>
    <property type="evidence" value="ECO:0007669"/>
    <property type="project" value="InterPro"/>
</dbReference>
<dbReference type="CDD" id="cd02440">
    <property type="entry name" value="AdoMet_MTases"/>
    <property type="match status" value="1"/>
</dbReference>
<dbReference type="Gene3D" id="3.40.50.150">
    <property type="entry name" value="Vaccinia Virus protein VP39"/>
    <property type="match status" value="1"/>
</dbReference>
<dbReference type="InterPro" id="IPR013216">
    <property type="entry name" value="Methyltransf_11"/>
</dbReference>
<dbReference type="InterPro" id="IPR029063">
    <property type="entry name" value="SAM-dependent_MTases_sf"/>
</dbReference>
<dbReference type="PANTHER" id="PTHR43591:SF24">
    <property type="entry name" value="2-METHOXY-6-POLYPRENYL-1,4-BENZOQUINOL METHYLASE, MITOCHONDRIAL"/>
    <property type="match status" value="1"/>
</dbReference>
<dbReference type="PANTHER" id="PTHR43591">
    <property type="entry name" value="METHYLTRANSFERASE"/>
    <property type="match status" value="1"/>
</dbReference>
<dbReference type="Pfam" id="PF08241">
    <property type="entry name" value="Methyltransf_11"/>
    <property type="match status" value="1"/>
</dbReference>
<dbReference type="SUPFAM" id="SSF53335">
    <property type="entry name" value="S-adenosyl-L-methionine-dependent methyltransferases"/>
    <property type="match status" value="1"/>
</dbReference>
<comment type="similarity">
    <text evidence="2">To M.tuberculosis Rv1403c.</text>
</comment>
<organism>
    <name type="scientific">Mycobacterium tuberculosis (strain ATCC 25618 / H37Rv)</name>
    <dbReference type="NCBI Taxonomy" id="83332"/>
    <lineage>
        <taxon>Bacteria</taxon>
        <taxon>Bacillati</taxon>
        <taxon>Actinomycetota</taxon>
        <taxon>Actinomycetes</taxon>
        <taxon>Mycobacteriales</taxon>
        <taxon>Mycobacteriaceae</taxon>
        <taxon>Mycobacterium</taxon>
        <taxon>Mycobacterium tuberculosis complex</taxon>
    </lineage>
</organism>
<proteinExistence type="evidence at protein level"/>
<sequence length="274" mass="29262">MTIDTPAREDQTLAATHRAMWALGDYALMAEEVMAPLGPILVAAAGIGPGVRVLDVAAGSGNISLPAAKTGATVISTDLTPELLQRSQARAAQQGLTLQYQEANAQALPFADDEFDTVISAIGVMFAPDHQAAADELVRVCRPGGTIGVISWTCEGFFGRMLATIRPYRPSVSADLPPSALWGREAYVTGLLGDGVTGLKTARGLLEVKRFDTAQAVHDYFKNNYGPTIEAYAHIGDNAVLAAELDRQLVELAAQYLSDGVMEWEYLLLTAEKR</sequence>
<accession>P9WLY7</accession>
<accession>L0T9B0</accession>
<accession>P64841</accession>
<accession>P71673</accession>
<feature type="signal peptide" evidence="1">
    <location>
        <begin position="1"/>
        <end position="30"/>
    </location>
</feature>
<feature type="chain" id="PRO_0000014103" description="Uncharacterized protein Rv1405c">
    <location>
        <begin position="31"/>
        <end position="274"/>
    </location>
</feature>